<sequence>MNKSQEQVSFKDVCVDFTQEEWYLLDPAQKILYRDVILENYSNLVSVGYCITKPEVIFKIEQGEEPWILEKGFPSQCHPERKWKVDDVLESSQENEDDHFWELLFHNNKTVSVENGDRGSKTFNLGTDPVSLRNYPYKICDSCEMNLKNISGLIISKKNCSRKKPDEFNVCEKLLLDIRHEKIPIGEKSYKYDQKRNAINYHQDLSQPSFGQSFEYSKNGQGFHDEAAFFTNKRSQIGETVCKYNECGRTFIESLKLNISQRPHLEMEPYGCSICGKSFCMNLRFGHQRALTKDNPYEYNEYGEIFCDNSAFIIHQGAYTRKILREYKVSDKTWEKSALLKHQIVHMGGKSYDYNENGSNFSKKSHLTQLRRAHTGEKTFECGECGKTFWEKSNLTQHQRTHTGEKPYECTECGKAFCQKPHLTNHQRTHTGEKPYECKQCGKTFCVKSNLTEHQRTHTGEKPYECNACGKSFCHRSALTVHQRTHTGEKPFICNECGKSFCVKSNLIVHQRTHTGEKPYKCNECGKTFCEKSALTKHQRTHTGEKPYECNACGKTFSQRSVLTKHQRIHTRVKALSTS</sequence>
<dbReference type="EMBL" id="AJ491695">
    <property type="protein sequence ID" value="CAD36954.1"/>
    <property type="molecule type" value="mRNA"/>
</dbReference>
<dbReference type="EMBL" id="AJ492196">
    <property type="protein sequence ID" value="CAD37332.1"/>
    <property type="molecule type" value="mRNA"/>
</dbReference>
<dbReference type="EMBL" id="AJ245587">
    <property type="protein sequence ID" value="CAB52547.1"/>
    <property type="molecule type" value="Genomic_DNA"/>
</dbReference>
<dbReference type="EMBL" id="AL135791">
    <property type="status" value="NOT_ANNOTATED_CDS"/>
    <property type="molecule type" value="Genomic_DNA"/>
</dbReference>
<dbReference type="EMBL" id="CH471072">
    <property type="protein sequence ID" value="EAW85897.1"/>
    <property type="molecule type" value="Genomic_DNA"/>
</dbReference>
<dbReference type="EMBL" id="CH471072">
    <property type="protein sequence ID" value="EAW85899.1"/>
    <property type="molecule type" value="Genomic_DNA"/>
</dbReference>
<dbReference type="EMBL" id="BC110869">
    <property type="protein sequence ID" value="AAI10870.1"/>
    <property type="molecule type" value="mRNA"/>
</dbReference>
<dbReference type="EMBL" id="BC146820">
    <property type="protein sequence ID" value="AAI46821.1"/>
    <property type="molecule type" value="mRNA"/>
</dbReference>
<dbReference type="CCDS" id="CCDS58077.1">
    <molecule id="Q8NDW4-2"/>
</dbReference>
<dbReference type="CCDS" id="CCDS7194.1">
    <molecule id="Q8NDW4-1"/>
</dbReference>
<dbReference type="RefSeq" id="NP_001254526.1">
    <molecule id="Q8NDW4-1"/>
    <property type="nucleotide sequence ID" value="NM_001267597.2"/>
</dbReference>
<dbReference type="RefSeq" id="NP_001254534.1">
    <molecule id="Q8NDW4-2"/>
    <property type="nucleotide sequence ID" value="NM_001267605.2"/>
</dbReference>
<dbReference type="RefSeq" id="NP_001254535.1">
    <molecule id="Q8NDW4-2"/>
    <property type="nucleotide sequence ID" value="NM_001267606.2"/>
</dbReference>
<dbReference type="RefSeq" id="NP_001339398.1">
    <molecule id="Q8NDW4-1"/>
    <property type="nucleotide sequence ID" value="NM_001352469.2"/>
</dbReference>
<dbReference type="RefSeq" id="NP_001339399.1">
    <molecule id="Q8NDW4-1"/>
    <property type="nucleotide sequence ID" value="NM_001352470.2"/>
</dbReference>
<dbReference type="RefSeq" id="NP_001339400.1">
    <molecule id="Q8NDW4-1"/>
    <property type="nucleotide sequence ID" value="NM_001352471.2"/>
</dbReference>
<dbReference type="RefSeq" id="NP_001339401.1">
    <molecule id="Q8NDW4-1"/>
    <property type="nucleotide sequence ID" value="NM_001352472.2"/>
</dbReference>
<dbReference type="RefSeq" id="NP_001339402.1">
    <molecule id="Q8NDW4-1"/>
    <property type="nucleotide sequence ID" value="NM_001352473.2"/>
</dbReference>
<dbReference type="RefSeq" id="NP_001339403.1">
    <molecule id="Q8NDW4-1"/>
    <property type="nucleotide sequence ID" value="NM_001352474.2"/>
</dbReference>
<dbReference type="RefSeq" id="NP_001339406.1">
    <molecule id="Q8NDW4-2"/>
    <property type="nucleotide sequence ID" value="NM_001352477.2"/>
</dbReference>
<dbReference type="RefSeq" id="NP_001339407.1">
    <molecule id="Q8NDW4-2"/>
    <property type="nucleotide sequence ID" value="NM_001352478.2"/>
</dbReference>
<dbReference type="RefSeq" id="NP_001339408.1">
    <molecule id="Q8NDW4-2"/>
    <property type="nucleotide sequence ID" value="NM_001352479.2"/>
</dbReference>
<dbReference type="RefSeq" id="NP_001339409.1">
    <molecule id="Q8NDW4-2"/>
    <property type="nucleotide sequence ID" value="NM_001352480.2"/>
</dbReference>
<dbReference type="RefSeq" id="NP_001339410.1">
    <molecule id="Q8NDW4-2"/>
    <property type="nucleotide sequence ID" value="NM_001352481.2"/>
</dbReference>
<dbReference type="RefSeq" id="NP_066383.1">
    <molecule id="Q8NDW4-1"/>
    <property type="nucleotide sequence ID" value="NM_021045.3"/>
</dbReference>
<dbReference type="RefSeq" id="XP_006717548.1">
    <property type="nucleotide sequence ID" value="XM_006717485.3"/>
</dbReference>
<dbReference type="RefSeq" id="XP_011517899.1">
    <property type="nucleotide sequence ID" value="XM_011519597.2"/>
</dbReference>
<dbReference type="RefSeq" id="XP_011517900.1">
    <property type="nucleotide sequence ID" value="XM_011519598.2"/>
</dbReference>
<dbReference type="RefSeq" id="XP_011517901.1">
    <molecule id="Q8NDW4-2"/>
    <property type="nucleotide sequence ID" value="XM_011519599.2"/>
</dbReference>
<dbReference type="RefSeq" id="XP_011517902.1">
    <property type="nucleotide sequence ID" value="XM_011519600.2"/>
</dbReference>
<dbReference type="RefSeq" id="XP_016871934.1">
    <molecule id="Q8NDW4-1"/>
    <property type="nucleotide sequence ID" value="XM_017016445.2"/>
</dbReference>
<dbReference type="RefSeq" id="XP_016871935.1">
    <property type="nucleotide sequence ID" value="XM_017016446.1"/>
</dbReference>
<dbReference type="RefSeq" id="XP_016871939.1">
    <property type="nucleotide sequence ID" value="XM_017016450.1"/>
</dbReference>
<dbReference type="RefSeq" id="XP_047281500.1">
    <molecule id="Q8NDW4-1"/>
    <property type="nucleotide sequence ID" value="XM_047425544.1"/>
</dbReference>
<dbReference type="RefSeq" id="XP_047281501.1">
    <molecule id="Q8NDW4-1"/>
    <property type="nucleotide sequence ID" value="XM_047425545.1"/>
</dbReference>
<dbReference type="RefSeq" id="XP_047281502.1">
    <molecule id="Q8NDW4-2"/>
    <property type="nucleotide sequence ID" value="XM_047425546.1"/>
</dbReference>
<dbReference type="RefSeq" id="XP_047281503.1">
    <molecule id="Q8NDW4-2"/>
    <property type="nucleotide sequence ID" value="XM_047425547.1"/>
</dbReference>
<dbReference type="RefSeq" id="XP_047281504.1">
    <molecule id="Q8NDW4-2"/>
    <property type="nucleotide sequence ID" value="XM_047425548.1"/>
</dbReference>
<dbReference type="RefSeq" id="XP_054222363.1">
    <molecule id="Q8NDW4-1"/>
    <property type="nucleotide sequence ID" value="XM_054366388.1"/>
</dbReference>
<dbReference type="RefSeq" id="XP_054222364.1">
    <molecule id="Q8NDW4-1"/>
    <property type="nucleotide sequence ID" value="XM_054366389.1"/>
</dbReference>
<dbReference type="RefSeq" id="XP_054222366.1">
    <molecule id="Q8NDW4-2"/>
    <property type="nucleotide sequence ID" value="XM_054366391.1"/>
</dbReference>
<dbReference type="RefSeq" id="XP_054222367.1">
    <molecule id="Q8NDW4-2"/>
    <property type="nucleotide sequence ID" value="XM_054366392.1"/>
</dbReference>
<dbReference type="RefSeq" id="XP_054222368.1">
    <molecule id="Q8NDW4-2"/>
    <property type="nucleotide sequence ID" value="XM_054366393.1"/>
</dbReference>
<dbReference type="SMR" id="Q8NDW4"/>
<dbReference type="BioGRID" id="121447">
    <property type="interactions" value="12"/>
</dbReference>
<dbReference type="FunCoup" id="Q8NDW4">
    <property type="interactions" value="291"/>
</dbReference>
<dbReference type="IntAct" id="Q8NDW4">
    <property type="interactions" value="20"/>
</dbReference>
<dbReference type="STRING" id="9606.ENSP00000379208"/>
<dbReference type="iPTMnet" id="Q8NDW4"/>
<dbReference type="PhosphoSitePlus" id="Q8NDW4"/>
<dbReference type="BioMuta" id="ZNF248"/>
<dbReference type="DMDM" id="47606299"/>
<dbReference type="jPOST" id="Q8NDW4"/>
<dbReference type="MassIVE" id="Q8NDW4"/>
<dbReference type="PaxDb" id="9606-ENSP00000379208"/>
<dbReference type="PeptideAtlas" id="Q8NDW4"/>
<dbReference type="ProteomicsDB" id="73067"/>
<dbReference type="ProteomicsDB" id="73069">
    <molecule id="Q8NDW4-1"/>
</dbReference>
<dbReference type="Antibodypedia" id="26721">
    <property type="antibodies" value="117 antibodies from 18 providers"/>
</dbReference>
<dbReference type="DNASU" id="57209"/>
<dbReference type="Ensembl" id="ENST00000357328.8">
    <molecule id="Q8NDW4-1"/>
    <property type="protein sequence ID" value="ENSP00000349882.4"/>
    <property type="gene ID" value="ENSG00000198105.16"/>
</dbReference>
<dbReference type="Ensembl" id="ENST00000374648.7">
    <molecule id="Q8NDW4-2"/>
    <property type="protein sequence ID" value="ENSP00000363778.3"/>
    <property type="gene ID" value="ENSG00000198105.16"/>
</dbReference>
<dbReference type="Ensembl" id="ENST00000395867.8">
    <molecule id="Q8NDW4-1"/>
    <property type="protein sequence ID" value="ENSP00000379208.3"/>
    <property type="gene ID" value="ENSG00000198105.16"/>
</dbReference>
<dbReference type="Ensembl" id="ENST00000611278.4">
    <molecule id="Q8NDW4-2"/>
    <property type="protein sequence ID" value="ENSP00000484191.1"/>
    <property type="gene ID" value="ENSG00000198105.16"/>
</dbReference>
<dbReference type="GeneID" id="57209"/>
<dbReference type="KEGG" id="hsa:57209"/>
<dbReference type="MANE-Select" id="ENST00000395867.8">
    <property type="protein sequence ID" value="ENSP00000379208.3"/>
    <property type="RefSeq nucleotide sequence ID" value="NM_021045.3"/>
    <property type="RefSeq protein sequence ID" value="NP_066383.1"/>
</dbReference>
<dbReference type="UCSC" id="uc001izc.5">
    <molecule id="Q8NDW4-1"/>
    <property type="organism name" value="human"/>
</dbReference>
<dbReference type="AGR" id="HGNC:13041"/>
<dbReference type="CTD" id="57209"/>
<dbReference type="DisGeNET" id="57209"/>
<dbReference type="GeneCards" id="ZNF248"/>
<dbReference type="HGNC" id="HGNC:13041">
    <property type="gene designation" value="ZNF248"/>
</dbReference>
<dbReference type="HPA" id="ENSG00000198105">
    <property type="expression patterns" value="Low tissue specificity"/>
</dbReference>
<dbReference type="neXtProt" id="NX_Q8NDW4"/>
<dbReference type="OpenTargets" id="ENSG00000198105"/>
<dbReference type="PharmGKB" id="PA37619"/>
<dbReference type="VEuPathDB" id="HostDB:ENSG00000198105"/>
<dbReference type="eggNOG" id="KOG1721">
    <property type="taxonomic scope" value="Eukaryota"/>
</dbReference>
<dbReference type="GeneTree" id="ENSGT00940000161962"/>
<dbReference type="HOGENOM" id="CLU_002678_0_12_1"/>
<dbReference type="InParanoid" id="Q8NDW4"/>
<dbReference type="OMA" id="MEPHECS"/>
<dbReference type="OrthoDB" id="9819978at2759"/>
<dbReference type="PAN-GO" id="Q8NDW4">
    <property type="GO annotations" value="3 GO annotations based on evolutionary models"/>
</dbReference>
<dbReference type="PhylomeDB" id="Q8NDW4"/>
<dbReference type="TreeFam" id="TF337898"/>
<dbReference type="PathwayCommons" id="Q8NDW4"/>
<dbReference type="Reactome" id="R-HSA-212436">
    <property type="pathway name" value="Generic Transcription Pathway"/>
</dbReference>
<dbReference type="SignaLink" id="Q8NDW4"/>
<dbReference type="BioGRID-ORCS" id="57209">
    <property type="hits" value="10 hits in 1180 CRISPR screens"/>
</dbReference>
<dbReference type="ChiTaRS" id="ZNF248">
    <property type="organism name" value="human"/>
</dbReference>
<dbReference type="GenomeRNAi" id="57209"/>
<dbReference type="Pharos" id="Q8NDW4">
    <property type="development level" value="Tdark"/>
</dbReference>
<dbReference type="PRO" id="PR:Q8NDW4"/>
<dbReference type="Proteomes" id="UP000005640">
    <property type="component" value="Chromosome 10"/>
</dbReference>
<dbReference type="RNAct" id="Q8NDW4">
    <property type="molecule type" value="protein"/>
</dbReference>
<dbReference type="Bgee" id="ENSG00000198105">
    <property type="expression patterns" value="Expressed in middle temporal gyrus and 191 other cell types or tissues"/>
</dbReference>
<dbReference type="ExpressionAtlas" id="Q8NDW4">
    <property type="expression patterns" value="baseline and differential"/>
</dbReference>
<dbReference type="GO" id="GO:0005634">
    <property type="term" value="C:nucleus"/>
    <property type="evidence" value="ECO:0000318"/>
    <property type="project" value="GO_Central"/>
</dbReference>
<dbReference type="GO" id="GO:0000981">
    <property type="term" value="F:DNA-binding transcription factor activity, RNA polymerase II-specific"/>
    <property type="evidence" value="ECO:0000318"/>
    <property type="project" value="GO_Central"/>
</dbReference>
<dbReference type="GO" id="GO:0000977">
    <property type="term" value="F:RNA polymerase II transcription regulatory region sequence-specific DNA binding"/>
    <property type="evidence" value="ECO:0000318"/>
    <property type="project" value="GO_Central"/>
</dbReference>
<dbReference type="GO" id="GO:0008270">
    <property type="term" value="F:zinc ion binding"/>
    <property type="evidence" value="ECO:0007669"/>
    <property type="project" value="UniProtKB-KW"/>
</dbReference>
<dbReference type="GO" id="GO:0006357">
    <property type="term" value="P:regulation of transcription by RNA polymerase II"/>
    <property type="evidence" value="ECO:0000318"/>
    <property type="project" value="GO_Central"/>
</dbReference>
<dbReference type="CDD" id="cd07765">
    <property type="entry name" value="KRAB_A-box"/>
    <property type="match status" value="1"/>
</dbReference>
<dbReference type="FunFam" id="3.30.160.60:FF:000555">
    <property type="entry name" value="Zinc finger protein 1 homolog"/>
    <property type="match status" value="1"/>
</dbReference>
<dbReference type="FunFam" id="3.30.160.60:FF:000914">
    <property type="entry name" value="Zinc finger protein 16"/>
    <property type="match status" value="1"/>
</dbReference>
<dbReference type="FunFam" id="3.30.160.60:FF:002343">
    <property type="entry name" value="Zinc finger protein 33A"/>
    <property type="match status" value="1"/>
</dbReference>
<dbReference type="FunFam" id="3.30.160.60:FF:000060">
    <property type="entry name" value="zinc finger protein 436"/>
    <property type="match status" value="1"/>
</dbReference>
<dbReference type="FunFam" id="3.30.160.60:FF:002090">
    <property type="entry name" value="Zinc finger protein 473"/>
    <property type="match status" value="1"/>
</dbReference>
<dbReference type="FunFam" id="3.30.160.60:FF:002254">
    <property type="entry name" value="Zinc finger protein 540"/>
    <property type="match status" value="1"/>
</dbReference>
<dbReference type="FunFam" id="3.30.160.60:FF:001157">
    <property type="entry name" value="Zinc finger protein 793"/>
    <property type="match status" value="1"/>
</dbReference>
<dbReference type="Gene3D" id="6.10.140.140">
    <property type="match status" value="1"/>
</dbReference>
<dbReference type="Gene3D" id="3.30.160.60">
    <property type="entry name" value="Classic Zinc Finger"/>
    <property type="match status" value="9"/>
</dbReference>
<dbReference type="InterPro" id="IPR001909">
    <property type="entry name" value="KRAB"/>
</dbReference>
<dbReference type="InterPro" id="IPR036051">
    <property type="entry name" value="KRAB_dom_sf"/>
</dbReference>
<dbReference type="InterPro" id="IPR036236">
    <property type="entry name" value="Znf_C2H2_sf"/>
</dbReference>
<dbReference type="InterPro" id="IPR013087">
    <property type="entry name" value="Znf_C2H2_type"/>
</dbReference>
<dbReference type="PANTHER" id="PTHR24393">
    <property type="entry name" value="ZINC FINGER PROTEIN"/>
    <property type="match status" value="1"/>
</dbReference>
<dbReference type="PANTHER" id="PTHR24393:SF159">
    <property type="entry name" value="ZINC FINGER PROTEIN 345-RELATED"/>
    <property type="match status" value="1"/>
</dbReference>
<dbReference type="Pfam" id="PF01352">
    <property type="entry name" value="KRAB"/>
    <property type="match status" value="1"/>
</dbReference>
<dbReference type="Pfam" id="PF00096">
    <property type="entry name" value="zf-C2H2"/>
    <property type="match status" value="7"/>
</dbReference>
<dbReference type="SMART" id="SM00349">
    <property type="entry name" value="KRAB"/>
    <property type="match status" value="1"/>
</dbReference>
<dbReference type="SMART" id="SM00355">
    <property type="entry name" value="ZnF_C2H2"/>
    <property type="match status" value="7"/>
</dbReference>
<dbReference type="SUPFAM" id="SSF57667">
    <property type="entry name" value="beta-beta-alpha zinc fingers"/>
    <property type="match status" value="7"/>
</dbReference>
<dbReference type="SUPFAM" id="SSF109640">
    <property type="entry name" value="KRAB domain (Kruppel-associated box)"/>
    <property type="match status" value="1"/>
</dbReference>
<dbReference type="PROSITE" id="PS50805">
    <property type="entry name" value="KRAB"/>
    <property type="match status" value="1"/>
</dbReference>
<dbReference type="PROSITE" id="PS00028">
    <property type="entry name" value="ZINC_FINGER_C2H2_1"/>
    <property type="match status" value="7"/>
</dbReference>
<dbReference type="PROSITE" id="PS50157">
    <property type="entry name" value="ZINC_FINGER_C2H2_2"/>
    <property type="match status" value="8"/>
</dbReference>
<gene>
    <name type="primary">ZNF248</name>
</gene>
<keyword id="KW-0025">Alternative splicing</keyword>
<keyword id="KW-0238">DNA-binding</keyword>
<keyword id="KW-1017">Isopeptide bond</keyword>
<keyword id="KW-0479">Metal-binding</keyword>
<keyword id="KW-0539">Nucleus</keyword>
<keyword id="KW-1267">Proteomics identification</keyword>
<keyword id="KW-1185">Reference proteome</keyword>
<keyword id="KW-0677">Repeat</keyword>
<keyword id="KW-0804">Transcription</keyword>
<keyword id="KW-0805">Transcription regulation</keyword>
<keyword id="KW-0832">Ubl conjugation</keyword>
<keyword id="KW-0862">Zinc</keyword>
<keyword id="KW-0863">Zinc-finger</keyword>
<accession>Q8NDW4</accession>
<accession>Q8NDV8</accession>
<accession>Q9UMP3</accession>
<reference key="1">
    <citation type="journal article" date="2003" name="Genome Res.">
        <title>Genomic sequence and transcriptional profile of the boundary between pericentromeric satellites and genes on human chromosome arm 10p.</title>
        <authorList>
            <person name="Guy J."/>
            <person name="Hearn T."/>
            <person name="Crosier M."/>
            <person name="Mudge J."/>
            <person name="Viggiano L."/>
            <person name="Koczan D."/>
            <person name="Thiesen H.-J."/>
            <person name="Bailey J.A."/>
            <person name="Horvath J.E."/>
            <person name="Eichler E.E."/>
            <person name="Earthrowl M.E."/>
            <person name="Deloukas P."/>
            <person name="French L."/>
            <person name="Rogers J."/>
            <person name="Bentley D."/>
            <person name="Jackson M.S."/>
        </authorList>
    </citation>
    <scope>NUCLEOTIDE SEQUENCE [MRNA] (ISOFORMS 1 AND 2)</scope>
</reference>
<reference key="2">
    <citation type="journal article" date="2004" name="Nature">
        <title>The DNA sequence and comparative analysis of human chromosome 10.</title>
        <authorList>
            <person name="Deloukas P."/>
            <person name="Earthrowl M.E."/>
            <person name="Grafham D.V."/>
            <person name="Rubenfield M."/>
            <person name="French L."/>
            <person name="Steward C.A."/>
            <person name="Sims S.K."/>
            <person name="Jones M.C."/>
            <person name="Searle S."/>
            <person name="Scott C."/>
            <person name="Howe K."/>
            <person name="Hunt S.E."/>
            <person name="Andrews T.D."/>
            <person name="Gilbert J.G.R."/>
            <person name="Swarbreck D."/>
            <person name="Ashurst J.L."/>
            <person name="Taylor A."/>
            <person name="Battles J."/>
            <person name="Bird C.P."/>
            <person name="Ainscough R."/>
            <person name="Almeida J.P."/>
            <person name="Ashwell R.I.S."/>
            <person name="Ambrose K.D."/>
            <person name="Babbage A.K."/>
            <person name="Bagguley C.L."/>
            <person name="Bailey J."/>
            <person name="Banerjee R."/>
            <person name="Bates K."/>
            <person name="Beasley H."/>
            <person name="Bray-Allen S."/>
            <person name="Brown A.J."/>
            <person name="Brown J.Y."/>
            <person name="Burford D.C."/>
            <person name="Burrill W."/>
            <person name="Burton J."/>
            <person name="Cahill P."/>
            <person name="Camire D."/>
            <person name="Carter N.P."/>
            <person name="Chapman J.C."/>
            <person name="Clark S.Y."/>
            <person name="Clarke G."/>
            <person name="Clee C.M."/>
            <person name="Clegg S."/>
            <person name="Corby N."/>
            <person name="Coulson A."/>
            <person name="Dhami P."/>
            <person name="Dutta I."/>
            <person name="Dunn M."/>
            <person name="Faulkner L."/>
            <person name="Frankish A."/>
            <person name="Frankland J.A."/>
            <person name="Garner P."/>
            <person name="Garnett J."/>
            <person name="Gribble S."/>
            <person name="Griffiths C."/>
            <person name="Grocock R."/>
            <person name="Gustafson E."/>
            <person name="Hammond S."/>
            <person name="Harley J.L."/>
            <person name="Hart E."/>
            <person name="Heath P.D."/>
            <person name="Ho T.P."/>
            <person name="Hopkins B."/>
            <person name="Horne J."/>
            <person name="Howden P.J."/>
            <person name="Huckle E."/>
            <person name="Hynds C."/>
            <person name="Johnson C."/>
            <person name="Johnson D."/>
            <person name="Kana A."/>
            <person name="Kay M."/>
            <person name="Kimberley A.M."/>
            <person name="Kershaw J.K."/>
            <person name="Kokkinaki M."/>
            <person name="Laird G.K."/>
            <person name="Lawlor S."/>
            <person name="Lee H.M."/>
            <person name="Leongamornlert D.A."/>
            <person name="Laird G."/>
            <person name="Lloyd C."/>
            <person name="Lloyd D.M."/>
            <person name="Loveland J."/>
            <person name="Lovell J."/>
            <person name="McLaren S."/>
            <person name="McLay K.E."/>
            <person name="McMurray A."/>
            <person name="Mashreghi-Mohammadi M."/>
            <person name="Matthews L."/>
            <person name="Milne S."/>
            <person name="Nickerson T."/>
            <person name="Nguyen M."/>
            <person name="Overton-Larty E."/>
            <person name="Palmer S.A."/>
            <person name="Pearce A.V."/>
            <person name="Peck A.I."/>
            <person name="Pelan S."/>
            <person name="Phillimore B."/>
            <person name="Porter K."/>
            <person name="Rice C.M."/>
            <person name="Rogosin A."/>
            <person name="Ross M.T."/>
            <person name="Sarafidou T."/>
            <person name="Sehra H.K."/>
            <person name="Shownkeen R."/>
            <person name="Skuce C.D."/>
            <person name="Smith M."/>
            <person name="Standring L."/>
            <person name="Sycamore N."/>
            <person name="Tester J."/>
            <person name="Thorpe A."/>
            <person name="Torcasso W."/>
            <person name="Tracey A."/>
            <person name="Tromans A."/>
            <person name="Tsolas J."/>
            <person name="Wall M."/>
            <person name="Walsh J."/>
            <person name="Wang H."/>
            <person name="Weinstock K."/>
            <person name="West A.P."/>
            <person name="Willey D.L."/>
            <person name="Whitehead S.L."/>
            <person name="Wilming L."/>
            <person name="Wray P.W."/>
            <person name="Young L."/>
            <person name="Chen Y."/>
            <person name="Lovering R.C."/>
            <person name="Moschonas N.K."/>
            <person name="Siebert R."/>
            <person name="Fechtel K."/>
            <person name="Bentley D."/>
            <person name="Durbin R.M."/>
            <person name="Hubbard T."/>
            <person name="Doucette-Stamm L."/>
            <person name="Beck S."/>
            <person name="Smith D.R."/>
            <person name="Rogers J."/>
        </authorList>
    </citation>
    <scope>NUCLEOTIDE SEQUENCE [LARGE SCALE GENOMIC DNA]</scope>
</reference>
<reference key="3">
    <citation type="submission" date="2005-07" db="EMBL/GenBank/DDBJ databases">
        <authorList>
            <person name="Mural R.J."/>
            <person name="Istrail S."/>
            <person name="Sutton G.G."/>
            <person name="Florea L."/>
            <person name="Halpern A.L."/>
            <person name="Mobarry C.M."/>
            <person name="Lippert R."/>
            <person name="Walenz B."/>
            <person name="Shatkay H."/>
            <person name="Dew I."/>
            <person name="Miller J.R."/>
            <person name="Flanigan M.J."/>
            <person name="Edwards N.J."/>
            <person name="Bolanos R."/>
            <person name="Fasulo D."/>
            <person name="Halldorsson B.V."/>
            <person name="Hannenhalli S."/>
            <person name="Turner R."/>
            <person name="Yooseph S."/>
            <person name="Lu F."/>
            <person name="Nusskern D.R."/>
            <person name="Shue B.C."/>
            <person name="Zheng X.H."/>
            <person name="Zhong F."/>
            <person name="Delcher A.L."/>
            <person name="Huson D.H."/>
            <person name="Kravitz S.A."/>
            <person name="Mouchard L."/>
            <person name="Reinert K."/>
            <person name="Remington K.A."/>
            <person name="Clark A.G."/>
            <person name="Waterman M.S."/>
            <person name="Eichler E.E."/>
            <person name="Adams M.D."/>
            <person name="Hunkapiller M.W."/>
            <person name="Myers E.W."/>
            <person name="Venter J.C."/>
        </authorList>
    </citation>
    <scope>NUCLEOTIDE SEQUENCE [LARGE SCALE GENOMIC DNA]</scope>
</reference>
<reference key="4">
    <citation type="journal article" date="2004" name="Genome Res.">
        <title>The status, quality, and expansion of the NIH full-length cDNA project: the Mammalian Gene Collection (MGC).</title>
        <authorList>
            <consortium name="The MGC Project Team"/>
        </authorList>
    </citation>
    <scope>NUCLEOTIDE SEQUENCE [LARGE SCALE MRNA] (ISOFORM 2)</scope>
    <source>
        <tissue>Duodenum</tissue>
    </source>
</reference>
<reference key="5">
    <citation type="thesis" date="1999" institute="University of Newcastle upon Tyne" country="United Kingdom">
        <authorList>
            <person name="Hearn T."/>
        </authorList>
    </citation>
    <scope>NUCLEOTIDE SEQUENCE [GENOMIC DNA] OF 235-579</scope>
</reference>
<reference key="6">
    <citation type="journal article" date="2017" name="Nat. Struct. Mol. Biol.">
        <title>Site-specific mapping of the human SUMO proteome reveals co-modification with phosphorylation.</title>
        <authorList>
            <person name="Hendriks I.A."/>
            <person name="Lyon D."/>
            <person name="Young C."/>
            <person name="Jensen L.J."/>
            <person name="Vertegaal A.C."/>
            <person name="Nielsen M.L."/>
        </authorList>
    </citation>
    <scope>SUMOYLATION [LARGE SCALE ANALYSIS] AT LYS-341</scope>
    <scope>IDENTIFICATION BY MASS SPECTROMETRY [LARGE SCALE ANALYSIS]</scope>
</reference>
<protein>
    <recommendedName>
        <fullName>Zinc finger protein 248</fullName>
    </recommendedName>
</protein>
<name>ZN248_HUMAN</name>
<comment type="function">
    <text>May be involved in transcriptional regulation.</text>
</comment>
<comment type="interaction">
    <interactant intactId="EBI-12163557">
        <id>Q8NDW4</id>
    </interactant>
    <interactant intactId="EBI-16439278">
        <id>Q6FHY5</id>
        <label>MEOX2</label>
    </interactant>
    <organismsDiffer>false</organismsDiffer>
    <experiments>3</experiments>
</comment>
<comment type="subcellular location">
    <subcellularLocation>
        <location evidence="5">Nucleus</location>
    </subcellularLocation>
</comment>
<comment type="alternative products">
    <event type="alternative splicing"/>
    <isoform>
        <id>Q8NDW4-1</id>
        <name>1</name>
        <sequence type="displayed"/>
    </isoform>
    <isoform>
        <id>Q8NDW4-2</id>
        <name>2</name>
        <sequence type="described" ref="VSP_045321"/>
    </isoform>
</comment>
<comment type="similarity">
    <text evidence="5">Belongs to the krueppel C2H2-type zinc-finger protein family.</text>
</comment>
<evidence type="ECO:0000255" key="1">
    <source>
        <dbReference type="PROSITE-ProRule" id="PRU00042"/>
    </source>
</evidence>
<evidence type="ECO:0000255" key="2">
    <source>
        <dbReference type="PROSITE-ProRule" id="PRU00119"/>
    </source>
</evidence>
<evidence type="ECO:0000303" key="3">
    <source>
    </source>
</evidence>
<evidence type="ECO:0000303" key="4">
    <source>
    </source>
</evidence>
<evidence type="ECO:0000305" key="5"/>
<evidence type="ECO:0007744" key="6">
    <source>
    </source>
</evidence>
<organism>
    <name type="scientific">Homo sapiens</name>
    <name type="common">Human</name>
    <dbReference type="NCBI Taxonomy" id="9606"/>
    <lineage>
        <taxon>Eukaryota</taxon>
        <taxon>Metazoa</taxon>
        <taxon>Chordata</taxon>
        <taxon>Craniata</taxon>
        <taxon>Vertebrata</taxon>
        <taxon>Euteleostomi</taxon>
        <taxon>Mammalia</taxon>
        <taxon>Eutheria</taxon>
        <taxon>Euarchontoglires</taxon>
        <taxon>Primates</taxon>
        <taxon>Haplorrhini</taxon>
        <taxon>Catarrhini</taxon>
        <taxon>Hominidae</taxon>
        <taxon>Homo</taxon>
    </lineage>
</organism>
<proteinExistence type="evidence at protein level"/>
<feature type="chain" id="PRO_0000047482" description="Zinc finger protein 248">
    <location>
        <begin position="1"/>
        <end position="579"/>
    </location>
</feature>
<feature type="domain" description="KRAB" evidence="2">
    <location>
        <begin position="8"/>
        <end position="79"/>
    </location>
</feature>
<feature type="zinc finger region" description="C2H2-type 1; degenerate" evidence="1">
    <location>
        <begin position="240"/>
        <end position="264"/>
    </location>
</feature>
<feature type="zinc finger region" description="C2H2-type 2" evidence="1">
    <location>
        <begin position="380"/>
        <end position="402"/>
    </location>
</feature>
<feature type="zinc finger region" description="C2H2-type 3" evidence="1">
    <location>
        <begin position="408"/>
        <end position="430"/>
    </location>
</feature>
<feature type="zinc finger region" description="C2H2-type 4" evidence="1">
    <location>
        <begin position="436"/>
        <end position="458"/>
    </location>
</feature>
<feature type="zinc finger region" description="C2H2-type 5" evidence="1">
    <location>
        <begin position="464"/>
        <end position="486"/>
    </location>
</feature>
<feature type="zinc finger region" description="C2H2-type 6" evidence="1">
    <location>
        <begin position="492"/>
        <end position="514"/>
    </location>
</feature>
<feature type="zinc finger region" description="C2H2-type 7" evidence="1">
    <location>
        <begin position="520"/>
        <end position="543"/>
    </location>
</feature>
<feature type="zinc finger region" description="C2H2-type 8" evidence="1">
    <location>
        <begin position="548"/>
        <end position="570"/>
    </location>
</feature>
<feature type="cross-link" description="Glycyl lysine isopeptide (Lys-Gly) (interchain with G-Cter in SUMO2)" evidence="6">
    <location>
        <position position="341"/>
    </location>
</feature>
<feature type="splice variant" id="VSP_045321" description="In isoform 2." evidence="3 4">
    <original>VSVENGDRGSKTFNLGTDPVSLRNYPYKICDSCEMNLKNISGLIISKKNCSRKKPDEFNVCEKLLLDIRHEKIPIGEKSYKYDQKRNAINYHQDLSQPSFGQSFEYSKNGQGFHDEAAFFTNKRSQIGETVCKYNECGRTFIESLKLNISQRPHLEMEPYGCSICGKSFCMNLRFGHQRALTKDNPYEYNEYGEIFCDNSAFIIHQGAYTRKILREYKVSDKTWEKSALLKHQIVHMGGKSYDYNENGSNFSKKSHLTQLRRAHTGEKTFECGECGKTFWEKSNLTQHQRTHTGEKPYECTECGKAFCQKPHLTNHQRTHTGEKPYECKQCGKTFCVKSNLTEHQRTHTGEKPYECNACGKSFCHRSALTVHQRTHTGEKPFICNECGKSFCVKSNLIVHQRTHTGEKPYKCNECGKTFCEKSALTKHQRTHTGEKPYECNACGKTFSQRSVLTKHQRIHTRVKALSTS</original>
    <variation>WNLKLIKVE</variation>
    <location>
        <begin position="111"/>
        <end position="579"/>
    </location>
</feature>
<feature type="sequence variant" id="VAR_052800" description="In dbSNP:rs11011379.">
    <original>K</original>
    <variation>E</variation>
    <location>
        <position position="218"/>
    </location>
</feature>